<protein>
    <recommendedName>
        <fullName evidence="1">Phenylalanine--tRNA ligase alpha subunit</fullName>
        <ecNumber evidence="1">6.1.1.20</ecNumber>
    </recommendedName>
    <alternativeName>
        <fullName evidence="1">Phenylalanyl-tRNA synthetase alpha subunit</fullName>
        <shortName evidence="1">PheRS</shortName>
    </alternativeName>
</protein>
<dbReference type="EC" id="6.1.1.20" evidence="1"/>
<dbReference type="EMBL" id="BA000039">
    <property type="protein sequence ID" value="BAC08241.1"/>
    <property type="molecule type" value="Genomic_DNA"/>
</dbReference>
<dbReference type="RefSeq" id="NP_681479.1">
    <property type="nucleotide sequence ID" value="NC_004113.1"/>
</dbReference>
<dbReference type="RefSeq" id="WP_011056537.1">
    <property type="nucleotide sequence ID" value="NC_004113.1"/>
</dbReference>
<dbReference type="SMR" id="Q8DL09"/>
<dbReference type="STRING" id="197221.gene:10747280"/>
<dbReference type="EnsemblBacteria" id="BAC08241">
    <property type="protein sequence ID" value="BAC08241"/>
    <property type="gene ID" value="BAC08241"/>
</dbReference>
<dbReference type="KEGG" id="tel:tlr0690"/>
<dbReference type="PATRIC" id="fig|197221.4.peg.730"/>
<dbReference type="eggNOG" id="COG0016">
    <property type="taxonomic scope" value="Bacteria"/>
</dbReference>
<dbReference type="Proteomes" id="UP000000440">
    <property type="component" value="Chromosome"/>
</dbReference>
<dbReference type="GO" id="GO:0005737">
    <property type="term" value="C:cytoplasm"/>
    <property type="evidence" value="ECO:0007669"/>
    <property type="project" value="UniProtKB-SubCell"/>
</dbReference>
<dbReference type="GO" id="GO:0005524">
    <property type="term" value="F:ATP binding"/>
    <property type="evidence" value="ECO:0007669"/>
    <property type="project" value="UniProtKB-UniRule"/>
</dbReference>
<dbReference type="GO" id="GO:0000287">
    <property type="term" value="F:magnesium ion binding"/>
    <property type="evidence" value="ECO:0007669"/>
    <property type="project" value="UniProtKB-UniRule"/>
</dbReference>
<dbReference type="GO" id="GO:0004826">
    <property type="term" value="F:phenylalanine-tRNA ligase activity"/>
    <property type="evidence" value="ECO:0007669"/>
    <property type="project" value="UniProtKB-UniRule"/>
</dbReference>
<dbReference type="GO" id="GO:0000049">
    <property type="term" value="F:tRNA binding"/>
    <property type="evidence" value="ECO:0007669"/>
    <property type="project" value="InterPro"/>
</dbReference>
<dbReference type="GO" id="GO:0006432">
    <property type="term" value="P:phenylalanyl-tRNA aminoacylation"/>
    <property type="evidence" value="ECO:0007669"/>
    <property type="project" value="UniProtKB-UniRule"/>
</dbReference>
<dbReference type="CDD" id="cd00496">
    <property type="entry name" value="PheRS_alpha_core"/>
    <property type="match status" value="1"/>
</dbReference>
<dbReference type="FunFam" id="3.30.930.10:FF:000003">
    <property type="entry name" value="Phenylalanine--tRNA ligase alpha subunit"/>
    <property type="match status" value="1"/>
</dbReference>
<dbReference type="Gene3D" id="3.30.930.10">
    <property type="entry name" value="Bira Bifunctional Protein, Domain 2"/>
    <property type="match status" value="1"/>
</dbReference>
<dbReference type="HAMAP" id="MF_00281">
    <property type="entry name" value="Phe_tRNA_synth_alpha1"/>
    <property type="match status" value="1"/>
</dbReference>
<dbReference type="InterPro" id="IPR006195">
    <property type="entry name" value="aa-tRNA-synth_II"/>
</dbReference>
<dbReference type="InterPro" id="IPR045864">
    <property type="entry name" value="aa-tRNA-synth_II/BPL/LPL"/>
</dbReference>
<dbReference type="InterPro" id="IPR004529">
    <property type="entry name" value="Phe-tRNA-synth_IIc_asu"/>
</dbReference>
<dbReference type="InterPro" id="IPR004188">
    <property type="entry name" value="Phe-tRNA_ligase_II_N"/>
</dbReference>
<dbReference type="InterPro" id="IPR022911">
    <property type="entry name" value="Phe_tRNA_ligase_alpha1_bac"/>
</dbReference>
<dbReference type="InterPro" id="IPR002319">
    <property type="entry name" value="Phenylalanyl-tRNA_Synthase"/>
</dbReference>
<dbReference type="InterPro" id="IPR010978">
    <property type="entry name" value="tRNA-bd_arm"/>
</dbReference>
<dbReference type="NCBIfam" id="TIGR00468">
    <property type="entry name" value="pheS"/>
    <property type="match status" value="1"/>
</dbReference>
<dbReference type="PANTHER" id="PTHR11538:SF41">
    <property type="entry name" value="PHENYLALANINE--TRNA LIGASE, MITOCHONDRIAL"/>
    <property type="match status" value="1"/>
</dbReference>
<dbReference type="PANTHER" id="PTHR11538">
    <property type="entry name" value="PHENYLALANYL-TRNA SYNTHETASE"/>
    <property type="match status" value="1"/>
</dbReference>
<dbReference type="Pfam" id="PF02912">
    <property type="entry name" value="Phe_tRNA-synt_N"/>
    <property type="match status" value="1"/>
</dbReference>
<dbReference type="Pfam" id="PF01409">
    <property type="entry name" value="tRNA-synt_2d"/>
    <property type="match status" value="1"/>
</dbReference>
<dbReference type="SUPFAM" id="SSF55681">
    <property type="entry name" value="Class II aaRS and biotin synthetases"/>
    <property type="match status" value="1"/>
</dbReference>
<dbReference type="SUPFAM" id="SSF46589">
    <property type="entry name" value="tRNA-binding arm"/>
    <property type="match status" value="1"/>
</dbReference>
<dbReference type="PROSITE" id="PS50862">
    <property type="entry name" value="AA_TRNA_LIGASE_II"/>
    <property type="match status" value="1"/>
</dbReference>
<keyword id="KW-0030">Aminoacyl-tRNA synthetase</keyword>
<keyword id="KW-0067">ATP-binding</keyword>
<keyword id="KW-0963">Cytoplasm</keyword>
<keyword id="KW-0436">Ligase</keyword>
<keyword id="KW-0460">Magnesium</keyword>
<keyword id="KW-0479">Metal-binding</keyword>
<keyword id="KW-0547">Nucleotide-binding</keyword>
<keyword id="KW-0648">Protein biosynthesis</keyword>
<keyword id="KW-1185">Reference proteome</keyword>
<accession>Q8DL09</accession>
<gene>
    <name evidence="1" type="primary">pheS</name>
    <name type="ordered locus">tlr0690</name>
</gene>
<organism>
    <name type="scientific">Thermosynechococcus vestitus (strain NIES-2133 / IAM M-273 / BP-1)</name>
    <dbReference type="NCBI Taxonomy" id="197221"/>
    <lineage>
        <taxon>Bacteria</taxon>
        <taxon>Bacillati</taxon>
        <taxon>Cyanobacteriota</taxon>
        <taxon>Cyanophyceae</taxon>
        <taxon>Acaryochloridales</taxon>
        <taxon>Thermosynechococcaceae</taxon>
        <taxon>Thermosynechococcus</taxon>
    </lineage>
</organism>
<comment type="catalytic activity">
    <reaction evidence="1">
        <text>tRNA(Phe) + L-phenylalanine + ATP = L-phenylalanyl-tRNA(Phe) + AMP + diphosphate + H(+)</text>
        <dbReference type="Rhea" id="RHEA:19413"/>
        <dbReference type="Rhea" id="RHEA-COMP:9668"/>
        <dbReference type="Rhea" id="RHEA-COMP:9699"/>
        <dbReference type="ChEBI" id="CHEBI:15378"/>
        <dbReference type="ChEBI" id="CHEBI:30616"/>
        <dbReference type="ChEBI" id="CHEBI:33019"/>
        <dbReference type="ChEBI" id="CHEBI:58095"/>
        <dbReference type="ChEBI" id="CHEBI:78442"/>
        <dbReference type="ChEBI" id="CHEBI:78531"/>
        <dbReference type="ChEBI" id="CHEBI:456215"/>
        <dbReference type="EC" id="6.1.1.20"/>
    </reaction>
</comment>
<comment type="cofactor">
    <cofactor evidence="1">
        <name>Mg(2+)</name>
        <dbReference type="ChEBI" id="CHEBI:18420"/>
    </cofactor>
    <text evidence="1">Binds 2 magnesium ions per tetramer.</text>
</comment>
<comment type="subunit">
    <text evidence="1">Tetramer of two alpha and two beta subunits.</text>
</comment>
<comment type="subcellular location">
    <subcellularLocation>
        <location evidence="1">Cytoplasm</location>
    </subcellularLocation>
</comment>
<comment type="similarity">
    <text evidence="1">Belongs to the class-II aminoacyl-tRNA synthetase family. Phe-tRNA synthetase alpha subunit type 1 subfamily.</text>
</comment>
<name>SYFA_THEVB</name>
<feature type="chain" id="PRO_0000126780" description="Phenylalanine--tRNA ligase alpha subunit">
    <location>
        <begin position="1"/>
        <end position="336"/>
    </location>
</feature>
<feature type="binding site" evidence="1">
    <location>
        <position position="263"/>
    </location>
    <ligand>
        <name>Mg(2+)</name>
        <dbReference type="ChEBI" id="CHEBI:18420"/>
        <note>shared with beta subunit</note>
    </ligand>
</feature>
<reference key="1">
    <citation type="journal article" date="2002" name="DNA Res.">
        <title>Complete genome structure of the thermophilic cyanobacterium Thermosynechococcus elongatus BP-1.</title>
        <authorList>
            <person name="Nakamura Y."/>
            <person name="Kaneko T."/>
            <person name="Sato S."/>
            <person name="Ikeuchi M."/>
            <person name="Katoh H."/>
            <person name="Sasamoto S."/>
            <person name="Watanabe A."/>
            <person name="Iriguchi M."/>
            <person name="Kawashima K."/>
            <person name="Kimura T."/>
            <person name="Kishida Y."/>
            <person name="Kiyokawa C."/>
            <person name="Kohara M."/>
            <person name="Matsumoto M."/>
            <person name="Matsuno A."/>
            <person name="Nakazaki N."/>
            <person name="Shimpo S."/>
            <person name="Sugimoto M."/>
            <person name="Takeuchi C."/>
            <person name="Yamada M."/>
            <person name="Tabata S."/>
        </authorList>
    </citation>
    <scope>NUCLEOTIDE SEQUENCE [LARGE SCALE GENOMIC DNA]</scope>
    <source>
        <strain>NIES-2133 / IAM M-273 / BP-1</strain>
    </source>
</reference>
<sequence length="336" mass="37729">MTSPILDRDRLSQQLQDLQAKALQAIATASTLDALEQLRVAYLGKKGELSQILALMGKLPAGDRPTIGTLANTLKEKLLQELEARRATLQAEKIAAQLAAESLDVTMPGVYRPQGHIHPLHSTIDRILDIFVGLGYTVANGPEMETEYYNFEALNTPADHPARDMQDTFYLPDGNLLRTHTSSVQIRYMELYEPPIRIVAPGRCYRRDTEDATHAAVFHQIEILAVDEGLTFTDLKGTVTTFLAELFGDVPIRFRASYFPFTEPSAEVDVQWQGRWLEVMGCGMVDPAVLKNVGYDPEVYTGFAAGFGVERFAMVLHQIDDIRRFYTSDLRFLRQF</sequence>
<evidence type="ECO:0000255" key="1">
    <source>
        <dbReference type="HAMAP-Rule" id="MF_00281"/>
    </source>
</evidence>
<proteinExistence type="inferred from homology"/>